<protein>
    <recommendedName>
        <fullName evidence="1">Gamma-glutamyl phosphate reductase</fullName>
        <shortName evidence="1">GPR</shortName>
        <ecNumber evidence="1">1.2.1.41</ecNumber>
    </recommendedName>
    <alternativeName>
        <fullName evidence="1">Glutamate-5-semialdehyde dehydrogenase</fullName>
    </alternativeName>
    <alternativeName>
        <fullName evidence="1">Glutamyl-gamma-semialdehyde dehydrogenase</fullName>
        <shortName evidence="1">GSA dehydrogenase</shortName>
    </alternativeName>
</protein>
<dbReference type="EC" id="1.2.1.41" evidence="1"/>
<dbReference type="EMBL" id="AM711867">
    <property type="protein sequence ID" value="CAN01539.1"/>
    <property type="molecule type" value="Genomic_DNA"/>
</dbReference>
<dbReference type="RefSeq" id="WP_012038179.1">
    <property type="nucleotide sequence ID" value="NC_009480.1"/>
</dbReference>
<dbReference type="SMR" id="A5CR34"/>
<dbReference type="KEGG" id="cmi:CMM_1493"/>
<dbReference type="eggNOG" id="COG0014">
    <property type="taxonomic scope" value="Bacteria"/>
</dbReference>
<dbReference type="HOGENOM" id="CLU_030231_0_0_11"/>
<dbReference type="UniPathway" id="UPA00098">
    <property type="reaction ID" value="UER00360"/>
</dbReference>
<dbReference type="Proteomes" id="UP000001564">
    <property type="component" value="Chromosome"/>
</dbReference>
<dbReference type="GO" id="GO:0005737">
    <property type="term" value="C:cytoplasm"/>
    <property type="evidence" value="ECO:0007669"/>
    <property type="project" value="UniProtKB-SubCell"/>
</dbReference>
<dbReference type="GO" id="GO:0004350">
    <property type="term" value="F:glutamate-5-semialdehyde dehydrogenase activity"/>
    <property type="evidence" value="ECO:0007669"/>
    <property type="project" value="UniProtKB-UniRule"/>
</dbReference>
<dbReference type="GO" id="GO:0050661">
    <property type="term" value="F:NADP binding"/>
    <property type="evidence" value="ECO:0007669"/>
    <property type="project" value="InterPro"/>
</dbReference>
<dbReference type="GO" id="GO:0055129">
    <property type="term" value="P:L-proline biosynthetic process"/>
    <property type="evidence" value="ECO:0007669"/>
    <property type="project" value="UniProtKB-UniRule"/>
</dbReference>
<dbReference type="CDD" id="cd07079">
    <property type="entry name" value="ALDH_F18-19_ProA-GPR"/>
    <property type="match status" value="1"/>
</dbReference>
<dbReference type="FunFam" id="3.40.309.10:FF:000006">
    <property type="entry name" value="Gamma-glutamyl phosphate reductase"/>
    <property type="match status" value="1"/>
</dbReference>
<dbReference type="Gene3D" id="3.40.605.10">
    <property type="entry name" value="Aldehyde Dehydrogenase, Chain A, domain 1"/>
    <property type="match status" value="1"/>
</dbReference>
<dbReference type="Gene3D" id="3.40.309.10">
    <property type="entry name" value="Aldehyde Dehydrogenase, Chain A, domain 2"/>
    <property type="match status" value="1"/>
</dbReference>
<dbReference type="HAMAP" id="MF_00412">
    <property type="entry name" value="ProA"/>
    <property type="match status" value="1"/>
</dbReference>
<dbReference type="InterPro" id="IPR016161">
    <property type="entry name" value="Ald_DH/histidinol_DH"/>
</dbReference>
<dbReference type="InterPro" id="IPR016163">
    <property type="entry name" value="Ald_DH_C"/>
</dbReference>
<dbReference type="InterPro" id="IPR016162">
    <property type="entry name" value="Ald_DH_N"/>
</dbReference>
<dbReference type="InterPro" id="IPR015590">
    <property type="entry name" value="Aldehyde_DH_dom"/>
</dbReference>
<dbReference type="InterPro" id="IPR020593">
    <property type="entry name" value="G-glutamylP_reductase_CS"/>
</dbReference>
<dbReference type="InterPro" id="IPR012134">
    <property type="entry name" value="Glu-5-SA_DH"/>
</dbReference>
<dbReference type="InterPro" id="IPR000965">
    <property type="entry name" value="GPR_dom"/>
</dbReference>
<dbReference type="NCBIfam" id="NF001221">
    <property type="entry name" value="PRK00197.1"/>
    <property type="match status" value="1"/>
</dbReference>
<dbReference type="NCBIfam" id="TIGR00407">
    <property type="entry name" value="proA"/>
    <property type="match status" value="1"/>
</dbReference>
<dbReference type="PANTHER" id="PTHR11063:SF8">
    <property type="entry name" value="DELTA-1-PYRROLINE-5-CARBOXYLATE SYNTHASE"/>
    <property type="match status" value="1"/>
</dbReference>
<dbReference type="PANTHER" id="PTHR11063">
    <property type="entry name" value="GLUTAMATE SEMIALDEHYDE DEHYDROGENASE"/>
    <property type="match status" value="1"/>
</dbReference>
<dbReference type="Pfam" id="PF00171">
    <property type="entry name" value="Aldedh"/>
    <property type="match status" value="1"/>
</dbReference>
<dbReference type="PIRSF" id="PIRSF000151">
    <property type="entry name" value="GPR"/>
    <property type="match status" value="1"/>
</dbReference>
<dbReference type="SUPFAM" id="SSF53720">
    <property type="entry name" value="ALDH-like"/>
    <property type="match status" value="1"/>
</dbReference>
<dbReference type="PROSITE" id="PS01223">
    <property type="entry name" value="PROA"/>
    <property type="match status" value="1"/>
</dbReference>
<sequence>MPSNVPAAPITTAEVLPADELERILEAARTASTSLAASTSVQRDAALDAIAAALVSGADRIVAANAEDLAAGRDAGLAAGLLDRLTLDARRVASLADAVTGIRGLDDPLGLVVRGRTLPNGLLLSQVRVPFGVVGAIYEARPNVTVDIAALALKSGNAVVLRGGSAALRTNAVLVDVMRGALERVGLLAHAVQTVDAHGRAGAARLMRARGLVDVLVPRGSAELIRTVVAESTVPVIETGAGVVHVYLDASADARMSVDIAVDAKVSRPSVCNAMETLLVHRDAAPRVLVAVLDALRDRGVTVHGDAAVRAMWPDAVPATDEDWAAEYLSLDLAVRVVDSVEDAVAHIARWSTHHTESIVTSDLAVAERFLAAVDSAVVMVNASTRFTDGSEFGFGAEVGISTQKLHARGPMGVQELTSTKWIVRGSGQVRG</sequence>
<proteinExistence type="inferred from homology"/>
<keyword id="KW-0028">Amino-acid biosynthesis</keyword>
<keyword id="KW-0963">Cytoplasm</keyword>
<keyword id="KW-0521">NADP</keyword>
<keyword id="KW-0560">Oxidoreductase</keyword>
<keyword id="KW-0641">Proline biosynthesis</keyword>
<reference key="1">
    <citation type="journal article" date="2008" name="J. Bacteriol.">
        <title>The genome sequence of the tomato-pathogenic actinomycete Clavibacter michiganensis subsp. michiganensis NCPPB382 reveals a large island involved in pathogenicity.</title>
        <authorList>
            <person name="Gartemann K.-H."/>
            <person name="Abt B."/>
            <person name="Bekel T."/>
            <person name="Burger A."/>
            <person name="Engemann J."/>
            <person name="Fluegel M."/>
            <person name="Gaigalat L."/>
            <person name="Goesmann A."/>
            <person name="Graefen I."/>
            <person name="Kalinowski J."/>
            <person name="Kaup O."/>
            <person name="Kirchner O."/>
            <person name="Krause L."/>
            <person name="Linke B."/>
            <person name="McHardy A."/>
            <person name="Meyer F."/>
            <person name="Pohle S."/>
            <person name="Rueckert C."/>
            <person name="Schneiker S."/>
            <person name="Zellermann E.-M."/>
            <person name="Puehler A."/>
            <person name="Eichenlaub R."/>
            <person name="Kaiser O."/>
            <person name="Bartels D."/>
        </authorList>
    </citation>
    <scope>NUCLEOTIDE SEQUENCE [LARGE SCALE GENOMIC DNA]</scope>
    <source>
        <strain>NCPPB 382</strain>
    </source>
</reference>
<feature type="chain" id="PRO_0000340878" description="Gamma-glutamyl phosphate reductase">
    <location>
        <begin position="1"/>
        <end position="432"/>
    </location>
</feature>
<organism>
    <name type="scientific">Clavibacter michiganensis subsp. michiganensis (strain NCPPB 382)</name>
    <dbReference type="NCBI Taxonomy" id="443906"/>
    <lineage>
        <taxon>Bacteria</taxon>
        <taxon>Bacillati</taxon>
        <taxon>Actinomycetota</taxon>
        <taxon>Actinomycetes</taxon>
        <taxon>Micrococcales</taxon>
        <taxon>Microbacteriaceae</taxon>
        <taxon>Clavibacter</taxon>
    </lineage>
</organism>
<evidence type="ECO:0000255" key="1">
    <source>
        <dbReference type="HAMAP-Rule" id="MF_00412"/>
    </source>
</evidence>
<comment type="function">
    <text evidence="1">Catalyzes the NADPH-dependent reduction of L-glutamate 5-phosphate into L-glutamate 5-semialdehyde and phosphate. The product spontaneously undergoes cyclization to form 1-pyrroline-5-carboxylate.</text>
</comment>
<comment type="catalytic activity">
    <reaction evidence="1">
        <text>L-glutamate 5-semialdehyde + phosphate + NADP(+) = L-glutamyl 5-phosphate + NADPH + H(+)</text>
        <dbReference type="Rhea" id="RHEA:19541"/>
        <dbReference type="ChEBI" id="CHEBI:15378"/>
        <dbReference type="ChEBI" id="CHEBI:43474"/>
        <dbReference type="ChEBI" id="CHEBI:57783"/>
        <dbReference type="ChEBI" id="CHEBI:58066"/>
        <dbReference type="ChEBI" id="CHEBI:58274"/>
        <dbReference type="ChEBI" id="CHEBI:58349"/>
        <dbReference type="EC" id="1.2.1.41"/>
    </reaction>
</comment>
<comment type="pathway">
    <text evidence="1">Amino-acid biosynthesis; L-proline biosynthesis; L-glutamate 5-semialdehyde from L-glutamate: step 2/2.</text>
</comment>
<comment type="subcellular location">
    <subcellularLocation>
        <location evidence="1">Cytoplasm</location>
    </subcellularLocation>
</comment>
<comment type="similarity">
    <text evidence="1">Belongs to the gamma-glutamyl phosphate reductase family.</text>
</comment>
<name>PROA_CLAM3</name>
<accession>A5CR34</accession>
<gene>
    <name evidence="1" type="primary">proA</name>
    <name type="ordered locus">CMM_1493</name>
</gene>